<organism>
    <name type="scientific">Mycobacterium tuberculosis (strain ATCC 25177 / H37Ra)</name>
    <dbReference type="NCBI Taxonomy" id="419947"/>
    <lineage>
        <taxon>Bacteria</taxon>
        <taxon>Bacillati</taxon>
        <taxon>Actinomycetota</taxon>
        <taxon>Actinomycetes</taxon>
        <taxon>Mycobacteriales</taxon>
        <taxon>Mycobacteriaceae</taxon>
        <taxon>Mycobacterium</taxon>
        <taxon>Mycobacterium tuberculosis complex</taxon>
    </lineage>
</organism>
<reference key="1">
    <citation type="journal article" date="2008" name="PLoS ONE">
        <title>Genetic basis of virulence attenuation revealed by comparative genomic analysis of Mycobacterium tuberculosis strain H37Ra versus H37Rv.</title>
        <authorList>
            <person name="Zheng H."/>
            <person name="Lu L."/>
            <person name="Wang B."/>
            <person name="Pu S."/>
            <person name="Zhang X."/>
            <person name="Zhu G."/>
            <person name="Shi W."/>
            <person name="Zhang L."/>
            <person name="Wang H."/>
            <person name="Wang S."/>
            <person name="Zhao G."/>
            <person name="Zhang Y."/>
        </authorList>
    </citation>
    <scope>NUCLEOTIDE SEQUENCE [LARGE SCALE GENOMIC DNA]</scope>
    <source>
        <strain>ATCC 25177 / H37Ra</strain>
    </source>
</reference>
<comment type="function">
    <text evidence="1">Catalyzes amidations at positions B, D, E, and G on adenosylcobyrinic A,C-diamide. NH(2) groups are provided by glutamine, and one molecule of ATP is hydrogenolyzed for each amidation.</text>
</comment>
<comment type="pathway">
    <text evidence="1">Cofactor biosynthesis; adenosylcobalamin biosynthesis.</text>
</comment>
<comment type="similarity">
    <text evidence="1">Belongs to the CobB/CobQ family. CobQ subfamily.</text>
</comment>
<evidence type="ECO:0000255" key="1">
    <source>
        <dbReference type="HAMAP-Rule" id="MF_00028"/>
    </source>
</evidence>
<dbReference type="EMBL" id="CP000611">
    <property type="protein sequence ID" value="ABQ71981.1"/>
    <property type="molecule type" value="Genomic_DNA"/>
</dbReference>
<dbReference type="RefSeq" id="WP_003899877.1">
    <property type="nucleotide sequence ID" value="NZ_CP016972.1"/>
</dbReference>
<dbReference type="KEGG" id="mra:MRA_0264"/>
<dbReference type="eggNOG" id="COG1492">
    <property type="taxonomic scope" value="Bacteria"/>
</dbReference>
<dbReference type="HOGENOM" id="CLU_019250_2_2_11"/>
<dbReference type="UniPathway" id="UPA00148"/>
<dbReference type="Proteomes" id="UP000001988">
    <property type="component" value="Chromosome"/>
</dbReference>
<dbReference type="GO" id="GO:0015420">
    <property type="term" value="F:ABC-type vitamin B12 transporter activity"/>
    <property type="evidence" value="ECO:0007669"/>
    <property type="project" value="UniProtKB-UniRule"/>
</dbReference>
<dbReference type="GO" id="GO:0003824">
    <property type="term" value="F:catalytic activity"/>
    <property type="evidence" value="ECO:0007669"/>
    <property type="project" value="InterPro"/>
</dbReference>
<dbReference type="GO" id="GO:0009236">
    <property type="term" value="P:cobalamin biosynthetic process"/>
    <property type="evidence" value="ECO:0007669"/>
    <property type="project" value="UniProtKB-UniRule"/>
</dbReference>
<dbReference type="CDD" id="cd05389">
    <property type="entry name" value="CobQ_N"/>
    <property type="match status" value="1"/>
</dbReference>
<dbReference type="CDD" id="cd01750">
    <property type="entry name" value="GATase1_CobQ"/>
    <property type="match status" value="1"/>
</dbReference>
<dbReference type="Gene3D" id="3.40.50.880">
    <property type="match status" value="1"/>
</dbReference>
<dbReference type="Gene3D" id="3.40.50.300">
    <property type="entry name" value="P-loop containing nucleotide triphosphate hydrolases"/>
    <property type="match status" value="1"/>
</dbReference>
<dbReference type="HAMAP" id="MF_00028">
    <property type="entry name" value="CobQ"/>
    <property type="match status" value="1"/>
</dbReference>
<dbReference type="InterPro" id="IPR029062">
    <property type="entry name" value="Class_I_gatase-like"/>
</dbReference>
<dbReference type="InterPro" id="IPR002586">
    <property type="entry name" value="CobQ/CobB/MinD/ParA_Nub-bd_dom"/>
</dbReference>
<dbReference type="InterPro" id="IPR033949">
    <property type="entry name" value="CobQ_GATase1"/>
</dbReference>
<dbReference type="InterPro" id="IPR047045">
    <property type="entry name" value="CobQ_N"/>
</dbReference>
<dbReference type="InterPro" id="IPR004459">
    <property type="entry name" value="CobQ_synth"/>
</dbReference>
<dbReference type="InterPro" id="IPR011698">
    <property type="entry name" value="GATase_3"/>
</dbReference>
<dbReference type="InterPro" id="IPR027417">
    <property type="entry name" value="P-loop_NTPase"/>
</dbReference>
<dbReference type="NCBIfam" id="TIGR00313">
    <property type="entry name" value="cobQ"/>
    <property type="match status" value="1"/>
</dbReference>
<dbReference type="NCBIfam" id="NF001989">
    <property type="entry name" value="PRK00784.1"/>
    <property type="match status" value="1"/>
</dbReference>
<dbReference type="PANTHER" id="PTHR21343:SF1">
    <property type="entry name" value="COBYRIC ACID SYNTHASE"/>
    <property type="match status" value="1"/>
</dbReference>
<dbReference type="PANTHER" id="PTHR21343">
    <property type="entry name" value="DETHIOBIOTIN SYNTHETASE"/>
    <property type="match status" value="1"/>
</dbReference>
<dbReference type="Pfam" id="PF01656">
    <property type="entry name" value="CbiA"/>
    <property type="match status" value="1"/>
</dbReference>
<dbReference type="Pfam" id="PF07685">
    <property type="entry name" value="GATase_3"/>
    <property type="match status" value="1"/>
</dbReference>
<dbReference type="SUPFAM" id="SSF52317">
    <property type="entry name" value="Class I glutamine amidotransferase-like"/>
    <property type="match status" value="1"/>
</dbReference>
<dbReference type="SUPFAM" id="SSF52540">
    <property type="entry name" value="P-loop containing nucleoside triphosphate hydrolases"/>
    <property type="match status" value="1"/>
</dbReference>
<dbReference type="PROSITE" id="PS51274">
    <property type="entry name" value="GATASE_COBBQ"/>
    <property type="match status" value="1"/>
</dbReference>
<accession>A5TYY1</accession>
<keyword id="KW-0169">Cobalamin biosynthesis</keyword>
<keyword id="KW-0315">Glutamine amidotransferase</keyword>
<keyword id="KW-1185">Reference proteome</keyword>
<feature type="chain" id="PRO_0000332354" description="Cobyric acid synthase">
    <location>
        <begin position="1"/>
        <end position="494"/>
    </location>
</feature>
<feature type="domain" description="GATase cobBQ-type" evidence="1">
    <location>
        <begin position="253"/>
        <end position="432"/>
    </location>
</feature>
<feature type="active site" description="Nucleophile" evidence="1">
    <location>
        <position position="334"/>
    </location>
</feature>
<feature type="active site" evidence="1">
    <location>
        <position position="424"/>
    </location>
</feature>
<gene>
    <name evidence="1" type="primary">cobQ</name>
    <name type="ordered locus">MRA_0264</name>
</gene>
<name>COBQ_MYCTA</name>
<proteinExistence type="inferred from homology"/>
<sequence length="494" mass="52135">MSGLLVAGTTSDAGKSAVTAGLCRALARRGVRVAPFKAQNMSNNSMVCRGPDGTGVEIGRAQWVQALAARTTPEAAMNPVLLKPASDHRSHVVLMGKPWGEVASSSWCAGRRALAEAACRAFDALAARYDVVVAEGAGSPAEINLRAGDYVNMGLARHAGLPTIVVGDIDRGGVFAAFLGTVALLAAEDQALVAGFVVNKFRGDSDLLAPGLRDLERVTGRRVYGTLPWHPDLWLDSEDALDLQGRRAAGTGARRVAVVRLPRISNFTDVDALGLEPDLDVVFASDPRALDDADLIVLPGTRATIADLAWLRARDLDRALLVHVAAGKPLLGICGGFQMLGRVIRDPYGIEGPGGQVTEVEGLGLLDVETAFSPHKVLRLPRGEGLGVPASGYEIHHGRITRGDTAEEFLGGARDGPVFGTMWHGSLEGDALREAFLRETLGLAPSGSCFLAARERRLDLLGDLVERHLDVDALLNLARHGCPPTLPFLAPGAP</sequence>
<protein>
    <recommendedName>
        <fullName evidence="1">Cobyric acid synthase</fullName>
    </recommendedName>
</protein>